<proteinExistence type="evidence at protein level"/>
<protein>
    <recommendedName>
        <fullName evidence="6">Cytosol aminopeptidase</fullName>
        <ecNumber evidence="1">3.4.11.1</ecNumber>
    </recommendedName>
    <alternativeName>
        <fullName evidence="1">Cysteinylglycine-S-conjugate dipeptidase</fullName>
        <ecNumber evidence="1">3.4.13.23</ecNumber>
    </alternativeName>
    <alternativeName>
        <fullName evidence="2">Leucine aminopeptidase 3</fullName>
        <shortName>LAP-3</shortName>
    </alternativeName>
    <alternativeName>
        <fullName evidence="1">Leucyl aminopeptidase</fullName>
    </alternativeName>
    <alternativeName>
        <fullName evidence="2">Peptidase S</fullName>
    </alternativeName>
    <alternativeName>
        <fullName evidence="3">Proline aminopeptidase</fullName>
        <ecNumber evidence="3">3.4.11.5</ecNumber>
    </alternativeName>
    <alternativeName>
        <fullName evidence="2">Prolyl aminopeptidase</fullName>
    </alternativeName>
</protein>
<reference key="1">
    <citation type="journal article" date="2010" name="Asian J. Androl.">
        <title>Glucose-regulated protein precursor (GRP78) and tumor rejection antigen (GP96) are unique to hamster caput epididymal spermatozoa.</title>
        <authorList>
            <person name="Kameshwari D.B."/>
            <person name="Bhande S."/>
            <person name="Sundaram C.S."/>
            <person name="Kota V."/>
            <person name="Siva A.B."/>
            <person name="Shivaji S."/>
        </authorList>
    </citation>
    <scope>IDENTIFICATION BY MASS SPECTROMETRY</scope>
</reference>
<name>AMPL_MESAU</name>
<sequence length="20" mass="2219">GVLFASGQNLARTLIEFLLR</sequence>
<organism>
    <name type="scientific">Mesocricetus auratus</name>
    <name type="common">Golden hamster</name>
    <dbReference type="NCBI Taxonomy" id="10036"/>
    <lineage>
        <taxon>Eukaryota</taxon>
        <taxon>Metazoa</taxon>
        <taxon>Chordata</taxon>
        <taxon>Craniata</taxon>
        <taxon>Vertebrata</taxon>
        <taxon>Euteleostomi</taxon>
        <taxon>Mammalia</taxon>
        <taxon>Eutheria</taxon>
        <taxon>Euarchontoglires</taxon>
        <taxon>Glires</taxon>
        <taxon>Rodentia</taxon>
        <taxon>Myomorpha</taxon>
        <taxon>Muroidea</taxon>
        <taxon>Cricetidae</taxon>
        <taxon>Cricetinae</taxon>
        <taxon>Mesocricetus</taxon>
    </lineage>
</organism>
<evidence type="ECO:0000250" key="1">
    <source>
        <dbReference type="UniProtKB" id="P00727"/>
    </source>
</evidence>
<evidence type="ECO:0000250" key="2">
    <source>
        <dbReference type="UniProtKB" id="P28838"/>
    </source>
</evidence>
<evidence type="ECO:0000250" key="3">
    <source>
        <dbReference type="UniProtKB" id="P28839"/>
    </source>
</evidence>
<evidence type="ECO:0000250" key="4">
    <source>
        <dbReference type="UniProtKB" id="Q68FS4"/>
    </source>
</evidence>
<evidence type="ECO:0000255" key="5"/>
<evidence type="ECO:0000305" key="6"/>
<comment type="function">
    <text evidence="1">Cytosolic metallopeptidase that catalyzes the removal of unsubstituted N-terminal hydrophobic amino acids from various peptides. The presence of Zn(2+) ions is essential for the peptidase activity, and the association with other cofactors can modulate the substrate spectificity of the enzyme. For instance, in the presence of Mn(2+), it displays a specific Cys-Gly hydrolyzing activity of Cys-Gly-S-conjugates. Involved in the metabolism of glutathione and in the degradation of glutathione S-conjugates, which may play a role in the control of the cell redox status.</text>
</comment>
<comment type="catalytic activity">
    <reaction evidence="2">
        <text>Release of an N-terminal amino acid, Xaa-|-Yaa-, in which Xaa is preferably Leu, but may be other amino acids including Pro although not Arg or Lys, and Yaa may be Pro. Amino acid amides and methyl esters are also readily hydrolyzed, but rates on arylamides are exceedingly low.</text>
        <dbReference type="EC" id="3.4.11.1"/>
    </reaction>
</comment>
<comment type="catalytic activity">
    <reaction evidence="1">
        <text>an S-substituted L-cysteinylglycine + H2O = an S-substituted L-cysteine + glycine</text>
        <dbReference type="Rhea" id="RHEA:60444"/>
        <dbReference type="ChEBI" id="CHEBI:15377"/>
        <dbReference type="ChEBI" id="CHEBI:57305"/>
        <dbReference type="ChEBI" id="CHEBI:58717"/>
        <dbReference type="ChEBI" id="CHEBI:143103"/>
        <dbReference type="EC" id="3.4.13.23"/>
    </reaction>
    <physiologicalReaction direction="left-to-right" evidence="1">
        <dbReference type="Rhea" id="RHEA:60445"/>
    </physiologicalReaction>
</comment>
<comment type="catalytic activity">
    <reaction evidence="1">
        <text>L-cysteinylglycine + H2O = L-cysteine + glycine</text>
        <dbReference type="Rhea" id="RHEA:28783"/>
        <dbReference type="ChEBI" id="CHEBI:15377"/>
        <dbReference type="ChEBI" id="CHEBI:35235"/>
        <dbReference type="ChEBI" id="CHEBI:57305"/>
        <dbReference type="ChEBI" id="CHEBI:61694"/>
    </reaction>
    <physiologicalReaction direction="left-to-right" evidence="1">
        <dbReference type="Rhea" id="RHEA:28784"/>
    </physiologicalReaction>
</comment>
<comment type="catalytic activity">
    <reaction evidence="4">
        <text>S-benzyl-L-cysteinylglycine + H2O = S-benzyl-L-cysteine + glycine</text>
        <dbReference type="Rhea" id="RHEA:62568"/>
        <dbReference type="ChEBI" id="CHEBI:15377"/>
        <dbReference type="ChEBI" id="CHEBI:57305"/>
        <dbReference type="ChEBI" id="CHEBI:145802"/>
        <dbReference type="ChEBI" id="CHEBI:145803"/>
    </reaction>
    <physiologicalReaction direction="left-to-right" evidence="4">
        <dbReference type="Rhea" id="RHEA:62569"/>
    </physiologicalReaction>
</comment>
<comment type="catalytic activity">
    <reaction evidence="3">
        <text>Release of N-terminal proline from a peptide.</text>
        <dbReference type="EC" id="3.4.11.5"/>
    </reaction>
</comment>
<comment type="cofactor">
    <cofactor evidence="1">
        <name>Zn(2+)</name>
        <dbReference type="ChEBI" id="CHEBI:29105"/>
    </cofactor>
    <cofactor evidence="1">
        <name>Mn(2+)</name>
        <dbReference type="ChEBI" id="CHEBI:29035"/>
    </cofactor>
    <text evidence="1">Binds two metal ions per subunit. Two metal binding sites with different affinities are located in the enzyme active site and can be occupied in vitro by different metals: site 1 is occupied by Zn(2+), Mn(2+), Mg(2+) or Co(2+), while the tight binding site 2 can be occupied by only Zn(2+) or Co(2+). One Zn(2+) ion is tightly bound to site 2 and essential for enzyme activity in vivo, while site 1 can be occupied by different metals to give different enzymatic activities. Mn(2+) is required for Cys-Gly hydrolysis activity. A third metal binding site may serve a structural role, possibly stabilizing part of the interface between the N-terminal and the catalytic domain.</text>
</comment>
<comment type="subunit">
    <text evidence="1">Homohexamer.</text>
</comment>
<comment type="subcellular location">
    <subcellularLocation>
        <location evidence="4">Cytoplasm</location>
    </subcellularLocation>
</comment>
<comment type="similarity">
    <text evidence="5">Belongs to the peptidase M17 family.</text>
</comment>
<feature type="chain" id="PRO_0000394412" description="Cytosol aminopeptidase">
    <location>
        <begin position="1" status="less than"/>
        <end position="20" status="greater than"/>
    </location>
</feature>
<feature type="modified residue" description="Phosphoserine" evidence="2">
    <location>
        <position position="6"/>
    </location>
</feature>
<feature type="non-consecutive residues" evidence="6">
    <location>
        <begin position="12"/>
        <end position="13"/>
    </location>
</feature>
<feature type="non-terminal residue">
    <location>
        <position position="1"/>
    </location>
</feature>
<feature type="non-terminal residue">
    <location>
        <position position="20"/>
    </location>
</feature>
<gene>
    <name evidence="1" type="primary">LAP3</name>
</gene>
<accession>P86249</accession>
<keyword id="KW-0031">Aminopeptidase</keyword>
<keyword id="KW-0963">Cytoplasm</keyword>
<keyword id="KW-0378">Hydrolase</keyword>
<keyword id="KW-0460">Magnesium</keyword>
<keyword id="KW-0464">Manganese</keyword>
<keyword id="KW-0479">Metal-binding</keyword>
<keyword id="KW-0597">Phosphoprotein</keyword>
<keyword id="KW-0645">Protease</keyword>
<keyword id="KW-1185">Reference proteome</keyword>
<keyword id="KW-0862">Zinc</keyword>
<dbReference type="EC" id="3.4.11.1" evidence="1"/>
<dbReference type="EC" id="3.4.13.23" evidence="1"/>
<dbReference type="EC" id="3.4.11.5" evidence="3"/>
<dbReference type="Proteomes" id="UP000189706">
    <property type="component" value="Unplaced"/>
</dbReference>
<dbReference type="GO" id="GO:0005737">
    <property type="term" value="C:cytoplasm"/>
    <property type="evidence" value="ECO:0007669"/>
    <property type="project" value="UniProtKB-SubCell"/>
</dbReference>
<dbReference type="GO" id="GO:0004177">
    <property type="term" value="F:aminopeptidase activity"/>
    <property type="evidence" value="ECO:0007669"/>
    <property type="project" value="UniProtKB-KW"/>
</dbReference>
<dbReference type="GO" id="GO:0004180">
    <property type="term" value="F:carboxypeptidase activity"/>
    <property type="evidence" value="ECO:0007669"/>
    <property type="project" value="RHEA"/>
</dbReference>
<dbReference type="GO" id="GO:0046872">
    <property type="term" value="F:metal ion binding"/>
    <property type="evidence" value="ECO:0007669"/>
    <property type="project" value="UniProtKB-KW"/>
</dbReference>
<dbReference type="GO" id="GO:0006508">
    <property type="term" value="P:proteolysis"/>
    <property type="evidence" value="ECO:0007669"/>
    <property type="project" value="UniProtKB-KW"/>
</dbReference>